<proteinExistence type="inferred from homology"/>
<evidence type="ECO:0000255" key="1">
    <source>
        <dbReference type="HAMAP-Rule" id="MF_00413"/>
    </source>
</evidence>
<comment type="function">
    <text evidence="1">Sulfur carrier protein involved in sulfur trafficking in the cell. Part of a sulfur-relay system required for 2-thiolation during synthesis of 2-thiouridine of the modified wobble base 5-methylaminomethyl-2-thiouridine (mnm(5)s(2)U) in tRNA. Interacts with IscS and stimulates its cysteine desulfurase activity. Accepts an activated sulfur from IscS, which is then transferred to TusD, and thus determines the direction of sulfur flow from IscS to 2-thiouridine formation. Also appears to be involved in sulfur transfer for the biosynthesis of molybdopterin.</text>
</comment>
<comment type="pathway">
    <text evidence="1">tRNA modification.</text>
</comment>
<comment type="subunit">
    <text evidence="1">Interacts with IscS.</text>
</comment>
<comment type="subcellular location">
    <subcellularLocation>
        <location evidence="1">Cytoplasm</location>
    </subcellularLocation>
</comment>
<comment type="similarity">
    <text evidence="1">Belongs to the sulfur carrier protein TusA family.</text>
</comment>
<dbReference type="EMBL" id="CU468135">
    <property type="protein sequence ID" value="CAO98329.1"/>
    <property type="molecule type" value="Genomic_DNA"/>
</dbReference>
<dbReference type="RefSeq" id="WP_012442955.1">
    <property type="nucleotide sequence ID" value="NC_010694.1"/>
</dbReference>
<dbReference type="SMR" id="B2VJN9"/>
<dbReference type="STRING" id="465817.ETA_32830"/>
<dbReference type="KEGG" id="eta:ETA_32830"/>
<dbReference type="eggNOG" id="COG0425">
    <property type="taxonomic scope" value="Bacteria"/>
</dbReference>
<dbReference type="HOGENOM" id="CLU_165255_5_0_6"/>
<dbReference type="OrthoDB" id="9797352at2"/>
<dbReference type="Proteomes" id="UP000001726">
    <property type="component" value="Chromosome"/>
</dbReference>
<dbReference type="GO" id="GO:0005737">
    <property type="term" value="C:cytoplasm"/>
    <property type="evidence" value="ECO:0007669"/>
    <property type="project" value="UniProtKB-SubCell"/>
</dbReference>
<dbReference type="GO" id="GO:0097163">
    <property type="term" value="F:sulfur carrier activity"/>
    <property type="evidence" value="ECO:0007669"/>
    <property type="project" value="UniProtKB-UniRule"/>
</dbReference>
<dbReference type="GO" id="GO:0002143">
    <property type="term" value="P:tRNA wobble position uridine thiolation"/>
    <property type="evidence" value="ECO:0007669"/>
    <property type="project" value="InterPro"/>
</dbReference>
<dbReference type="CDD" id="cd03423">
    <property type="entry name" value="SirA"/>
    <property type="match status" value="1"/>
</dbReference>
<dbReference type="Gene3D" id="3.30.110.40">
    <property type="entry name" value="TusA-like domain"/>
    <property type="match status" value="1"/>
</dbReference>
<dbReference type="HAMAP" id="MF_00413">
    <property type="entry name" value="Thiourid_synth_A"/>
    <property type="match status" value="1"/>
</dbReference>
<dbReference type="InterPro" id="IPR022931">
    <property type="entry name" value="Sulphur_carrier_TusA"/>
</dbReference>
<dbReference type="InterPro" id="IPR001455">
    <property type="entry name" value="TusA-like"/>
</dbReference>
<dbReference type="InterPro" id="IPR036868">
    <property type="entry name" value="TusA-like_sf"/>
</dbReference>
<dbReference type="NCBIfam" id="NF001423">
    <property type="entry name" value="PRK00299.1"/>
    <property type="match status" value="1"/>
</dbReference>
<dbReference type="PANTHER" id="PTHR33279:SF2">
    <property type="entry name" value="SULFUR CARRIER PROTEIN TUSA"/>
    <property type="match status" value="1"/>
</dbReference>
<dbReference type="PANTHER" id="PTHR33279">
    <property type="entry name" value="SULFUR CARRIER PROTEIN YEDF-RELATED"/>
    <property type="match status" value="1"/>
</dbReference>
<dbReference type="Pfam" id="PF01206">
    <property type="entry name" value="TusA"/>
    <property type="match status" value="1"/>
</dbReference>
<dbReference type="SUPFAM" id="SSF64307">
    <property type="entry name" value="SirA-like"/>
    <property type="match status" value="1"/>
</dbReference>
<dbReference type="PROSITE" id="PS01148">
    <property type="entry name" value="UPF0033"/>
    <property type="match status" value="1"/>
</dbReference>
<reference key="1">
    <citation type="journal article" date="2008" name="Environ. Microbiol.">
        <title>The genome of Erwinia tasmaniensis strain Et1/99, a non-pathogenic bacterium in the genus Erwinia.</title>
        <authorList>
            <person name="Kube M."/>
            <person name="Migdoll A.M."/>
            <person name="Mueller I."/>
            <person name="Kuhl H."/>
            <person name="Beck A."/>
            <person name="Reinhardt R."/>
            <person name="Geider K."/>
        </authorList>
    </citation>
    <scope>NUCLEOTIDE SEQUENCE [LARGE SCALE GENOMIC DNA]</scope>
    <source>
        <strain>DSM 17950 / CFBP 7177 / CIP 109463 / NCPPB 4357 / Et1/99</strain>
    </source>
</reference>
<protein>
    <recommendedName>
        <fullName evidence="1">Sulfur carrier protein TusA</fullName>
    </recommendedName>
    <alternativeName>
        <fullName evidence="1">Sulfur mediator TusA</fullName>
    </alternativeName>
    <alternativeName>
        <fullName evidence="1">Sulfur transfer protein TusA</fullName>
    </alternativeName>
    <alternativeName>
        <fullName evidence="1">tRNA 2-thiouridine synthesizing protein A</fullName>
    </alternativeName>
</protein>
<name>TUSA_ERWT9</name>
<organism>
    <name type="scientific">Erwinia tasmaniensis (strain DSM 17950 / CFBP 7177 / CIP 109463 / NCPPB 4357 / Et1/99)</name>
    <dbReference type="NCBI Taxonomy" id="465817"/>
    <lineage>
        <taxon>Bacteria</taxon>
        <taxon>Pseudomonadati</taxon>
        <taxon>Pseudomonadota</taxon>
        <taxon>Gammaproteobacteria</taxon>
        <taxon>Enterobacterales</taxon>
        <taxon>Erwiniaceae</taxon>
        <taxon>Erwinia</taxon>
    </lineage>
</organism>
<gene>
    <name evidence="1" type="primary">tusA</name>
    <name type="ordered locus">ETA_32830</name>
</gene>
<accession>B2VJN9</accession>
<feature type="chain" id="PRO_1000199910" description="Sulfur carrier protein TusA">
    <location>
        <begin position="1"/>
        <end position="81"/>
    </location>
</feature>
<feature type="active site" description="Cysteine persulfide intermediate" evidence="1">
    <location>
        <position position="19"/>
    </location>
</feature>
<sequence length="81" mass="9134">MSDPFANPDQTLDTQGLRCPEPVMMVRKTVRHMQDGETLLIIADDPATTRDIPGFCRFMEHTLVAQAVDALPYQYLLKKGL</sequence>
<keyword id="KW-0963">Cytoplasm</keyword>
<keyword id="KW-1185">Reference proteome</keyword>
<keyword id="KW-0819">tRNA processing</keyword>